<accession>B3PC08</accession>
<comment type="function">
    <text evidence="1">Allows the formation of correctly charged Gln-tRNA(Gln) through the transamidation of misacylated Glu-tRNA(Gln) in organisms which lack glutaminyl-tRNA synthetase. The reaction takes place in the presence of glutamine and ATP through an activated gamma-phospho-Glu-tRNA(Gln).</text>
</comment>
<comment type="catalytic activity">
    <reaction evidence="1">
        <text>L-glutamyl-tRNA(Gln) + L-glutamine + ATP + H2O = L-glutaminyl-tRNA(Gln) + L-glutamate + ADP + phosphate + H(+)</text>
        <dbReference type="Rhea" id="RHEA:17521"/>
        <dbReference type="Rhea" id="RHEA-COMP:9681"/>
        <dbReference type="Rhea" id="RHEA-COMP:9684"/>
        <dbReference type="ChEBI" id="CHEBI:15377"/>
        <dbReference type="ChEBI" id="CHEBI:15378"/>
        <dbReference type="ChEBI" id="CHEBI:29985"/>
        <dbReference type="ChEBI" id="CHEBI:30616"/>
        <dbReference type="ChEBI" id="CHEBI:43474"/>
        <dbReference type="ChEBI" id="CHEBI:58359"/>
        <dbReference type="ChEBI" id="CHEBI:78520"/>
        <dbReference type="ChEBI" id="CHEBI:78521"/>
        <dbReference type="ChEBI" id="CHEBI:456216"/>
        <dbReference type="EC" id="6.3.5.7"/>
    </reaction>
</comment>
<comment type="subunit">
    <text evidence="1">Heterotrimer of A, B and C subunits.</text>
</comment>
<comment type="similarity">
    <text evidence="1">Belongs to the amidase family. GatA subfamily.</text>
</comment>
<keyword id="KW-0067">ATP-binding</keyword>
<keyword id="KW-0436">Ligase</keyword>
<keyword id="KW-0547">Nucleotide-binding</keyword>
<keyword id="KW-0648">Protein biosynthesis</keyword>
<keyword id="KW-1185">Reference proteome</keyword>
<evidence type="ECO:0000255" key="1">
    <source>
        <dbReference type="HAMAP-Rule" id="MF_00120"/>
    </source>
</evidence>
<dbReference type="EC" id="6.3.5.7" evidence="1"/>
<dbReference type="EMBL" id="CP000934">
    <property type="protein sequence ID" value="ACE83581.1"/>
    <property type="molecule type" value="Genomic_DNA"/>
</dbReference>
<dbReference type="RefSeq" id="WP_012488413.1">
    <property type="nucleotide sequence ID" value="NC_010995.1"/>
</dbReference>
<dbReference type="SMR" id="B3PC08"/>
<dbReference type="STRING" id="498211.CJA_2819"/>
<dbReference type="KEGG" id="cja:CJA_2819"/>
<dbReference type="eggNOG" id="COG0154">
    <property type="taxonomic scope" value="Bacteria"/>
</dbReference>
<dbReference type="HOGENOM" id="CLU_009600_0_3_6"/>
<dbReference type="OrthoDB" id="9811471at2"/>
<dbReference type="Proteomes" id="UP000001036">
    <property type="component" value="Chromosome"/>
</dbReference>
<dbReference type="GO" id="GO:0030956">
    <property type="term" value="C:glutamyl-tRNA(Gln) amidotransferase complex"/>
    <property type="evidence" value="ECO:0007669"/>
    <property type="project" value="InterPro"/>
</dbReference>
<dbReference type="GO" id="GO:0005524">
    <property type="term" value="F:ATP binding"/>
    <property type="evidence" value="ECO:0007669"/>
    <property type="project" value="UniProtKB-KW"/>
</dbReference>
<dbReference type="GO" id="GO:0050567">
    <property type="term" value="F:glutaminyl-tRNA synthase (glutamine-hydrolyzing) activity"/>
    <property type="evidence" value="ECO:0007669"/>
    <property type="project" value="UniProtKB-UniRule"/>
</dbReference>
<dbReference type="GO" id="GO:0006412">
    <property type="term" value="P:translation"/>
    <property type="evidence" value="ECO:0007669"/>
    <property type="project" value="UniProtKB-UniRule"/>
</dbReference>
<dbReference type="Gene3D" id="3.90.1300.10">
    <property type="entry name" value="Amidase signature (AS) domain"/>
    <property type="match status" value="1"/>
</dbReference>
<dbReference type="HAMAP" id="MF_00120">
    <property type="entry name" value="GatA"/>
    <property type="match status" value="1"/>
</dbReference>
<dbReference type="InterPro" id="IPR000120">
    <property type="entry name" value="Amidase"/>
</dbReference>
<dbReference type="InterPro" id="IPR020556">
    <property type="entry name" value="Amidase_CS"/>
</dbReference>
<dbReference type="InterPro" id="IPR023631">
    <property type="entry name" value="Amidase_dom"/>
</dbReference>
<dbReference type="InterPro" id="IPR036928">
    <property type="entry name" value="AS_sf"/>
</dbReference>
<dbReference type="InterPro" id="IPR004412">
    <property type="entry name" value="GatA"/>
</dbReference>
<dbReference type="NCBIfam" id="TIGR00132">
    <property type="entry name" value="gatA"/>
    <property type="match status" value="1"/>
</dbReference>
<dbReference type="PANTHER" id="PTHR11895:SF151">
    <property type="entry name" value="GLUTAMYL-TRNA(GLN) AMIDOTRANSFERASE SUBUNIT A"/>
    <property type="match status" value="1"/>
</dbReference>
<dbReference type="PANTHER" id="PTHR11895">
    <property type="entry name" value="TRANSAMIDASE"/>
    <property type="match status" value="1"/>
</dbReference>
<dbReference type="Pfam" id="PF01425">
    <property type="entry name" value="Amidase"/>
    <property type="match status" value="1"/>
</dbReference>
<dbReference type="SUPFAM" id="SSF75304">
    <property type="entry name" value="Amidase signature (AS) enzymes"/>
    <property type="match status" value="1"/>
</dbReference>
<dbReference type="PROSITE" id="PS00571">
    <property type="entry name" value="AMIDASES"/>
    <property type="match status" value="1"/>
</dbReference>
<proteinExistence type="inferred from homology"/>
<name>GATA_CELJU</name>
<sequence>MHQFTIAELVKGLRNKDFSSTEITQHYLDRIARLDNTYNSYITVTGDVALQQAAAADKRLAAGNTSALCGVPIAHKDIFCTAGVRTSCASKMLDKFIAPYNATIVENYLKAGVVMLGKTNMDEFAMGSSNETSWYGPVKNPWNTHCVPGGSSGGSAAAVAAHLAPAATASDTGGSIRQPAALCGLTGIKPTYGRVSRWGMIAFASSLDQAGILSRTAEDAALLLNDMASYDPKDSTCIERDVPDYTADLNKPLNGLRIGVPKEYFGEGLNPKTAALVEAAIKVYESLGASIHSVSLPHTHLAVPAYYVIAPAECSANLSRFDGVRYGHRCEDPKDLMDLYMRSRSEGFGAEVKRRILVGTYALSAGYYDAYYSKAQKVRRLIKQDFVDAFHHVDVILGPTSPSPAFEFGSKGKDPVAMYLEDIYTIATNLAGLPGLSIPCGLVDDKPVGLQLIGNFFAEAQLLNAAHQFQQATDFHQQTAPGIE</sequence>
<protein>
    <recommendedName>
        <fullName evidence="1">Glutamyl-tRNA(Gln) amidotransferase subunit A</fullName>
        <shortName evidence="1">Glu-ADT subunit A</shortName>
        <ecNumber evidence="1">6.3.5.7</ecNumber>
    </recommendedName>
</protein>
<reference key="1">
    <citation type="journal article" date="2008" name="J. Bacteriol.">
        <title>Insights into plant cell wall degradation from the genome sequence of the soil bacterium Cellvibrio japonicus.</title>
        <authorList>
            <person name="DeBoy R.T."/>
            <person name="Mongodin E.F."/>
            <person name="Fouts D.E."/>
            <person name="Tailford L.E."/>
            <person name="Khouri H."/>
            <person name="Emerson J.B."/>
            <person name="Mohamoud Y."/>
            <person name="Watkins K."/>
            <person name="Henrissat B."/>
            <person name="Gilbert H.J."/>
            <person name="Nelson K.E."/>
        </authorList>
    </citation>
    <scope>NUCLEOTIDE SEQUENCE [LARGE SCALE GENOMIC DNA]</scope>
    <source>
        <strain>Ueda107</strain>
    </source>
</reference>
<feature type="chain" id="PRO_1000095117" description="Glutamyl-tRNA(Gln) amidotransferase subunit A">
    <location>
        <begin position="1"/>
        <end position="484"/>
    </location>
</feature>
<feature type="active site" description="Charge relay system" evidence="1">
    <location>
        <position position="76"/>
    </location>
</feature>
<feature type="active site" description="Charge relay system" evidence="1">
    <location>
        <position position="151"/>
    </location>
</feature>
<feature type="active site" description="Acyl-ester intermediate" evidence="1">
    <location>
        <position position="175"/>
    </location>
</feature>
<gene>
    <name evidence="1" type="primary">gatA</name>
    <name type="ordered locus">CJA_2819</name>
</gene>
<organism>
    <name type="scientific">Cellvibrio japonicus (strain Ueda107)</name>
    <name type="common">Pseudomonas fluorescens subsp. cellulosa</name>
    <dbReference type="NCBI Taxonomy" id="498211"/>
    <lineage>
        <taxon>Bacteria</taxon>
        <taxon>Pseudomonadati</taxon>
        <taxon>Pseudomonadota</taxon>
        <taxon>Gammaproteobacteria</taxon>
        <taxon>Cellvibrionales</taxon>
        <taxon>Cellvibrionaceae</taxon>
        <taxon>Cellvibrio</taxon>
    </lineage>
</organism>